<protein>
    <recommendedName>
        <fullName evidence="1">Tyrosine--tRNA ligase</fullName>
        <ecNumber evidence="1">6.1.1.1</ecNumber>
    </recommendedName>
    <alternativeName>
        <fullName evidence="1">Tyrosyl-tRNA synthetase</fullName>
        <shortName evidence="1">TyrRS</shortName>
    </alternativeName>
</protein>
<reference key="1">
    <citation type="journal article" date="2009" name="J. Bacteriol.">
        <title>Complete genome sequence and comparative genome analysis of enteropathogenic Escherichia coli O127:H6 strain E2348/69.</title>
        <authorList>
            <person name="Iguchi A."/>
            <person name="Thomson N.R."/>
            <person name="Ogura Y."/>
            <person name="Saunders D."/>
            <person name="Ooka T."/>
            <person name="Henderson I.R."/>
            <person name="Harris D."/>
            <person name="Asadulghani M."/>
            <person name="Kurokawa K."/>
            <person name="Dean P."/>
            <person name="Kenny B."/>
            <person name="Quail M.A."/>
            <person name="Thurston S."/>
            <person name="Dougan G."/>
            <person name="Hayashi T."/>
            <person name="Parkhill J."/>
            <person name="Frankel G."/>
        </authorList>
    </citation>
    <scope>NUCLEOTIDE SEQUENCE [LARGE SCALE GENOMIC DNA]</scope>
    <source>
        <strain>E2348/69 / EPEC</strain>
    </source>
</reference>
<name>SYY_ECO27</name>
<sequence>MASSNLIKQLQERGLVAQVTDEEALAERLAQGPIALYCGFDPTADSLHLGHLVPLLCLKRFQQAGHKPVALVGGATGLIGDPSFKAAERKLNTEETVQEWVDKIRKQVAPFLDFDCGENSAIAANNYDWFGNMNVLTFLRDIGKHFSVNQMINKEAVKQRLNREDQGISFTEFSYNLLQGYDFACLNKQYGVVLQIGGSDQWGNITSGIDLTRRLHQNQVFGLTVPLITKADGTKFGKTEGGAVWLDPKKTSPYKFYQFWINTADADVYRFLKFFTFMSIEEINALEEEDKNSGKAPRAQYVLAEQVTRLVHGEDGLQAAKRITECLFSGSLSALSEADFEQLAQDGVPMVEMEKGADLMQALVDSELQPSRGQARKTIASNAITINGEKQSDPEYFFKEEDRLFGRFTLLRRGKKNYCLICWK</sequence>
<organism>
    <name type="scientific">Escherichia coli O127:H6 (strain E2348/69 / EPEC)</name>
    <dbReference type="NCBI Taxonomy" id="574521"/>
    <lineage>
        <taxon>Bacteria</taxon>
        <taxon>Pseudomonadati</taxon>
        <taxon>Pseudomonadota</taxon>
        <taxon>Gammaproteobacteria</taxon>
        <taxon>Enterobacterales</taxon>
        <taxon>Enterobacteriaceae</taxon>
        <taxon>Escherichia</taxon>
    </lineage>
</organism>
<comment type="function">
    <text evidence="1">Catalyzes the attachment of tyrosine to tRNA(Tyr) in a two-step reaction: tyrosine is first activated by ATP to form Tyr-AMP and then transferred to the acceptor end of tRNA(Tyr).</text>
</comment>
<comment type="catalytic activity">
    <reaction evidence="1">
        <text>tRNA(Tyr) + L-tyrosine + ATP = L-tyrosyl-tRNA(Tyr) + AMP + diphosphate + H(+)</text>
        <dbReference type="Rhea" id="RHEA:10220"/>
        <dbReference type="Rhea" id="RHEA-COMP:9706"/>
        <dbReference type="Rhea" id="RHEA-COMP:9707"/>
        <dbReference type="ChEBI" id="CHEBI:15378"/>
        <dbReference type="ChEBI" id="CHEBI:30616"/>
        <dbReference type="ChEBI" id="CHEBI:33019"/>
        <dbReference type="ChEBI" id="CHEBI:58315"/>
        <dbReference type="ChEBI" id="CHEBI:78442"/>
        <dbReference type="ChEBI" id="CHEBI:78536"/>
        <dbReference type="ChEBI" id="CHEBI:456215"/>
        <dbReference type="EC" id="6.1.1.1"/>
    </reaction>
</comment>
<comment type="subunit">
    <text evidence="1">Homodimer.</text>
</comment>
<comment type="subcellular location">
    <subcellularLocation>
        <location evidence="1">Cytoplasm</location>
    </subcellularLocation>
</comment>
<comment type="similarity">
    <text evidence="1">Belongs to the class-I aminoacyl-tRNA synthetase family. TyrS type 1 subfamily.</text>
</comment>
<keyword id="KW-0007">Acetylation</keyword>
<keyword id="KW-0030">Aminoacyl-tRNA synthetase</keyword>
<keyword id="KW-0067">ATP-binding</keyword>
<keyword id="KW-0963">Cytoplasm</keyword>
<keyword id="KW-0436">Ligase</keyword>
<keyword id="KW-0547">Nucleotide-binding</keyword>
<keyword id="KW-0648">Protein biosynthesis</keyword>
<keyword id="KW-1185">Reference proteome</keyword>
<keyword id="KW-0694">RNA-binding</keyword>
<evidence type="ECO:0000255" key="1">
    <source>
        <dbReference type="HAMAP-Rule" id="MF_02006"/>
    </source>
</evidence>
<dbReference type="EC" id="6.1.1.1" evidence="1"/>
<dbReference type="EMBL" id="FM180568">
    <property type="protein sequence ID" value="CAS09272.1"/>
    <property type="molecule type" value="Genomic_DNA"/>
</dbReference>
<dbReference type="RefSeq" id="WP_001339629.1">
    <property type="nucleotide sequence ID" value="NC_011601.1"/>
</dbReference>
<dbReference type="SMR" id="B7URX8"/>
<dbReference type="KEGG" id="ecg:E2348C_1724"/>
<dbReference type="HOGENOM" id="CLU_024003_0_3_6"/>
<dbReference type="Proteomes" id="UP000008205">
    <property type="component" value="Chromosome"/>
</dbReference>
<dbReference type="GO" id="GO:0005829">
    <property type="term" value="C:cytosol"/>
    <property type="evidence" value="ECO:0007669"/>
    <property type="project" value="TreeGrafter"/>
</dbReference>
<dbReference type="GO" id="GO:0005524">
    <property type="term" value="F:ATP binding"/>
    <property type="evidence" value="ECO:0007669"/>
    <property type="project" value="UniProtKB-UniRule"/>
</dbReference>
<dbReference type="GO" id="GO:0003723">
    <property type="term" value="F:RNA binding"/>
    <property type="evidence" value="ECO:0007669"/>
    <property type="project" value="UniProtKB-KW"/>
</dbReference>
<dbReference type="GO" id="GO:0004831">
    <property type="term" value="F:tyrosine-tRNA ligase activity"/>
    <property type="evidence" value="ECO:0007669"/>
    <property type="project" value="UniProtKB-UniRule"/>
</dbReference>
<dbReference type="GO" id="GO:0006437">
    <property type="term" value="P:tyrosyl-tRNA aminoacylation"/>
    <property type="evidence" value="ECO:0007669"/>
    <property type="project" value="UniProtKB-UniRule"/>
</dbReference>
<dbReference type="CDD" id="cd00165">
    <property type="entry name" value="S4"/>
    <property type="match status" value="1"/>
</dbReference>
<dbReference type="CDD" id="cd00805">
    <property type="entry name" value="TyrRS_core"/>
    <property type="match status" value="1"/>
</dbReference>
<dbReference type="FunFam" id="1.10.240.10:FF:000001">
    <property type="entry name" value="Tyrosine--tRNA ligase"/>
    <property type="match status" value="1"/>
</dbReference>
<dbReference type="FunFam" id="3.10.290.10:FF:000007">
    <property type="entry name" value="Tyrosine--tRNA ligase"/>
    <property type="match status" value="1"/>
</dbReference>
<dbReference type="FunFam" id="3.40.50.620:FF:000008">
    <property type="entry name" value="Tyrosine--tRNA ligase"/>
    <property type="match status" value="1"/>
</dbReference>
<dbReference type="Gene3D" id="3.40.50.620">
    <property type="entry name" value="HUPs"/>
    <property type="match status" value="1"/>
</dbReference>
<dbReference type="Gene3D" id="3.10.290.10">
    <property type="entry name" value="RNA-binding S4 domain"/>
    <property type="match status" value="1"/>
</dbReference>
<dbReference type="Gene3D" id="1.10.240.10">
    <property type="entry name" value="Tyrosyl-Transfer RNA Synthetase"/>
    <property type="match status" value="1"/>
</dbReference>
<dbReference type="HAMAP" id="MF_02006">
    <property type="entry name" value="Tyr_tRNA_synth_type1"/>
    <property type="match status" value="1"/>
</dbReference>
<dbReference type="InterPro" id="IPR001412">
    <property type="entry name" value="aa-tRNA-synth_I_CS"/>
</dbReference>
<dbReference type="InterPro" id="IPR002305">
    <property type="entry name" value="aa-tRNA-synth_Ic"/>
</dbReference>
<dbReference type="InterPro" id="IPR014729">
    <property type="entry name" value="Rossmann-like_a/b/a_fold"/>
</dbReference>
<dbReference type="InterPro" id="IPR002942">
    <property type="entry name" value="S4_RNA-bd"/>
</dbReference>
<dbReference type="InterPro" id="IPR036986">
    <property type="entry name" value="S4_RNA-bd_sf"/>
</dbReference>
<dbReference type="InterPro" id="IPR054608">
    <property type="entry name" value="SYY-like_C"/>
</dbReference>
<dbReference type="InterPro" id="IPR002307">
    <property type="entry name" value="Tyr-tRNA-ligase"/>
</dbReference>
<dbReference type="InterPro" id="IPR024088">
    <property type="entry name" value="Tyr-tRNA-ligase_bac-type"/>
</dbReference>
<dbReference type="InterPro" id="IPR024107">
    <property type="entry name" value="Tyr-tRNA-ligase_bac_1"/>
</dbReference>
<dbReference type="NCBIfam" id="TIGR00234">
    <property type="entry name" value="tyrS"/>
    <property type="match status" value="1"/>
</dbReference>
<dbReference type="PANTHER" id="PTHR11766:SF0">
    <property type="entry name" value="TYROSINE--TRNA LIGASE, MITOCHONDRIAL"/>
    <property type="match status" value="1"/>
</dbReference>
<dbReference type="PANTHER" id="PTHR11766">
    <property type="entry name" value="TYROSYL-TRNA SYNTHETASE"/>
    <property type="match status" value="1"/>
</dbReference>
<dbReference type="Pfam" id="PF22421">
    <property type="entry name" value="SYY_C-terminal"/>
    <property type="match status" value="1"/>
</dbReference>
<dbReference type="Pfam" id="PF00579">
    <property type="entry name" value="tRNA-synt_1b"/>
    <property type="match status" value="1"/>
</dbReference>
<dbReference type="PRINTS" id="PR01040">
    <property type="entry name" value="TRNASYNTHTYR"/>
</dbReference>
<dbReference type="SMART" id="SM00363">
    <property type="entry name" value="S4"/>
    <property type="match status" value="1"/>
</dbReference>
<dbReference type="SUPFAM" id="SSF55174">
    <property type="entry name" value="Alpha-L RNA-binding motif"/>
    <property type="match status" value="1"/>
</dbReference>
<dbReference type="SUPFAM" id="SSF52374">
    <property type="entry name" value="Nucleotidylyl transferase"/>
    <property type="match status" value="1"/>
</dbReference>
<dbReference type="PROSITE" id="PS00178">
    <property type="entry name" value="AA_TRNA_LIGASE_I"/>
    <property type="match status" value="1"/>
</dbReference>
<dbReference type="PROSITE" id="PS50889">
    <property type="entry name" value="S4"/>
    <property type="match status" value="1"/>
</dbReference>
<gene>
    <name evidence="1" type="primary">tyrS</name>
    <name type="ordered locus">E2348C_1724</name>
</gene>
<proteinExistence type="inferred from homology"/>
<feature type="chain" id="PRO_1000189287" description="Tyrosine--tRNA ligase">
    <location>
        <begin position="1"/>
        <end position="424"/>
    </location>
</feature>
<feature type="domain" description="S4 RNA-binding" evidence="1">
    <location>
        <begin position="357"/>
        <end position="414"/>
    </location>
</feature>
<feature type="short sequence motif" description="'HIGH' region">
    <location>
        <begin position="42"/>
        <end position="51"/>
    </location>
</feature>
<feature type="short sequence motif" description="'KMSKS' region">
    <location>
        <begin position="235"/>
        <end position="239"/>
    </location>
</feature>
<feature type="binding site" evidence="1">
    <location>
        <position position="37"/>
    </location>
    <ligand>
        <name>L-tyrosine</name>
        <dbReference type="ChEBI" id="CHEBI:58315"/>
    </ligand>
</feature>
<feature type="binding site" evidence="1">
    <location>
        <position position="175"/>
    </location>
    <ligand>
        <name>L-tyrosine</name>
        <dbReference type="ChEBI" id="CHEBI:58315"/>
    </ligand>
</feature>
<feature type="binding site" evidence="1">
    <location>
        <position position="179"/>
    </location>
    <ligand>
        <name>L-tyrosine</name>
        <dbReference type="ChEBI" id="CHEBI:58315"/>
    </ligand>
</feature>
<feature type="binding site" evidence="1">
    <location>
        <position position="238"/>
    </location>
    <ligand>
        <name>ATP</name>
        <dbReference type="ChEBI" id="CHEBI:30616"/>
    </ligand>
</feature>
<feature type="modified residue" description="N6-acetyllysine" evidence="1">
    <location>
        <position position="144"/>
    </location>
</feature>
<accession>B7URX8</accession>